<sequence length="281" mass="30086">MEANTRSTGRLPAAFLTPGSSSFMDFLGEHQPEMLPGNRQLPPVQGVIEAPHGTTIVAVTFPGGVVLAGDRRATMGNMIAQRDIEKVFPADEYSAVGIAGTAGLAVEMVKLFQLELEHFEKVEGAQLSLEGKANRLSTMIRSNLGMAMQGLAVVPLFAGYDVDRGRGRIFSYDVTGGRSEERHFATTGSGSVFARGAMKKLFRDDLTEEQATTLVVQALYDAADDDSATGGPDVARRIYPIITVITEDGFRRLGEDEAAELAGSVLQARLEQPDGPRAALL</sequence>
<dbReference type="EC" id="3.4.25.1" evidence="1"/>
<dbReference type="EMBL" id="AF086832">
    <property type="protein sequence ID" value="AAC64284.1"/>
    <property type="molecule type" value="Genomic_DNA"/>
</dbReference>
<dbReference type="EMBL" id="AL939109">
    <property type="protein sequence ID" value="CAB59497.1"/>
    <property type="molecule type" value="Genomic_DNA"/>
</dbReference>
<dbReference type="RefSeq" id="NP_625919.1">
    <property type="nucleotide sequence ID" value="NC_003888.3"/>
</dbReference>
<dbReference type="RefSeq" id="WP_003977182.1">
    <property type="nucleotide sequence ID" value="NZ_VNID01000018.1"/>
</dbReference>
<dbReference type="SMR" id="Q7AKQ5"/>
<dbReference type="FunCoup" id="Q7AKQ5">
    <property type="interactions" value="273"/>
</dbReference>
<dbReference type="STRING" id="100226.gene:17759237"/>
<dbReference type="MEROPS" id="T01.005"/>
<dbReference type="PaxDb" id="100226-SCO1644"/>
<dbReference type="GeneID" id="91387383"/>
<dbReference type="KEGG" id="sco:SCO1644"/>
<dbReference type="PATRIC" id="fig|100226.15.peg.1659"/>
<dbReference type="eggNOG" id="COG0638">
    <property type="taxonomic scope" value="Bacteria"/>
</dbReference>
<dbReference type="HOGENOM" id="CLU_035750_2_0_11"/>
<dbReference type="InParanoid" id="Q7AKQ5"/>
<dbReference type="OrthoDB" id="5174038at2"/>
<dbReference type="PhylomeDB" id="Q7AKQ5"/>
<dbReference type="UniPathway" id="UPA00997"/>
<dbReference type="Proteomes" id="UP000001973">
    <property type="component" value="Chromosome"/>
</dbReference>
<dbReference type="GO" id="GO:0005737">
    <property type="term" value="C:cytoplasm"/>
    <property type="evidence" value="ECO:0000318"/>
    <property type="project" value="GO_Central"/>
</dbReference>
<dbReference type="GO" id="GO:0019774">
    <property type="term" value="C:proteasome core complex, beta-subunit complex"/>
    <property type="evidence" value="ECO:0000250"/>
    <property type="project" value="UniProtKB"/>
</dbReference>
<dbReference type="GO" id="GO:0004298">
    <property type="term" value="F:threonine-type endopeptidase activity"/>
    <property type="evidence" value="ECO:0007669"/>
    <property type="project" value="UniProtKB-UniRule"/>
</dbReference>
<dbReference type="GO" id="GO:0019941">
    <property type="term" value="P:modification-dependent protein catabolic process"/>
    <property type="evidence" value="ECO:0007669"/>
    <property type="project" value="UniProtKB-UniRule"/>
</dbReference>
<dbReference type="GO" id="GO:0010498">
    <property type="term" value="P:proteasomal protein catabolic process"/>
    <property type="evidence" value="ECO:0007669"/>
    <property type="project" value="UniProtKB-UniRule"/>
</dbReference>
<dbReference type="GO" id="GO:0051603">
    <property type="term" value="P:proteolysis involved in protein catabolic process"/>
    <property type="evidence" value="ECO:0000318"/>
    <property type="project" value="GO_Central"/>
</dbReference>
<dbReference type="CDD" id="cd01906">
    <property type="entry name" value="proteasome_protease_HslV"/>
    <property type="match status" value="1"/>
</dbReference>
<dbReference type="FunFam" id="3.60.20.10:FF:000046">
    <property type="entry name" value="Proteasome subunit beta"/>
    <property type="match status" value="1"/>
</dbReference>
<dbReference type="Gene3D" id="3.60.20.10">
    <property type="entry name" value="Glutamine Phosphoribosylpyrophosphate, subunit 1, domain 1"/>
    <property type="match status" value="1"/>
</dbReference>
<dbReference type="HAMAP" id="MF_02113_B">
    <property type="entry name" value="Proteasome_B_B"/>
    <property type="match status" value="1"/>
</dbReference>
<dbReference type="InterPro" id="IPR029055">
    <property type="entry name" value="Ntn_hydrolases_N"/>
</dbReference>
<dbReference type="InterPro" id="IPR000243">
    <property type="entry name" value="Pept_T1A_subB"/>
</dbReference>
<dbReference type="InterPro" id="IPR001353">
    <property type="entry name" value="Proteasome_sua/b"/>
</dbReference>
<dbReference type="InterPro" id="IPR023333">
    <property type="entry name" value="Proteasome_suB-type"/>
</dbReference>
<dbReference type="InterPro" id="IPR022483">
    <property type="entry name" value="PSB_actinobac"/>
</dbReference>
<dbReference type="NCBIfam" id="TIGR03690">
    <property type="entry name" value="20S_bact_beta"/>
    <property type="match status" value="1"/>
</dbReference>
<dbReference type="PANTHER" id="PTHR32194:SF0">
    <property type="entry name" value="ATP-DEPENDENT PROTEASE SUBUNIT HSLV"/>
    <property type="match status" value="1"/>
</dbReference>
<dbReference type="PANTHER" id="PTHR32194">
    <property type="entry name" value="METALLOPROTEASE TLDD"/>
    <property type="match status" value="1"/>
</dbReference>
<dbReference type="Pfam" id="PF00227">
    <property type="entry name" value="Proteasome"/>
    <property type="match status" value="1"/>
</dbReference>
<dbReference type="PRINTS" id="PR00141">
    <property type="entry name" value="PROTEASOME"/>
</dbReference>
<dbReference type="SUPFAM" id="SSF56235">
    <property type="entry name" value="N-terminal nucleophile aminohydrolases (Ntn hydrolases)"/>
    <property type="match status" value="1"/>
</dbReference>
<dbReference type="PROSITE" id="PS51476">
    <property type="entry name" value="PROTEASOME_BETA_2"/>
    <property type="match status" value="1"/>
</dbReference>
<accession>Q7AKQ5</accession>
<accession>O87598</accession>
<keyword id="KW-0068">Autocatalytic cleavage</keyword>
<keyword id="KW-0963">Cytoplasm</keyword>
<keyword id="KW-0903">Direct protein sequencing</keyword>
<keyword id="KW-0378">Hydrolase</keyword>
<keyword id="KW-0645">Protease</keyword>
<keyword id="KW-0647">Proteasome</keyword>
<keyword id="KW-1185">Reference proteome</keyword>
<keyword id="KW-0888">Threonine protease</keyword>
<keyword id="KW-0865">Zymogen</keyword>
<organism>
    <name type="scientific">Streptomyces coelicolor (strain ATCC BAA-471 / A3(2) / M145)</name>
    <dbReference type="NCBI Taxonomy" id="100226"/>
    <lineage>
        <taxon>Bacteria</taxon>
        <taxon>Bacillati</taxon>
        <taxon>Actinomycetota</taxon>
        <taxon>Actinomycetes</taxon>
        <taxon>Kitasatosporales</taxon>
        <taxon>Streptomycetaceae</taxon>
        <taxon>Streptomyces</taxon>
        <taxon>Streptomyces albidoflavus group</taxon>
    </lineage>
</organism>
<proteinExistence type="evidence at protein level"/>
<name>PSB_STRCO</name>
<evidence type="ECO:0000255" key="1">
    <source>
        <dbReference type="HAMAP-Rule" id="MF_02113"/>
    </source>
</evidence>
<evidence type="ECO:0000269" key="2">
    <source>
    </source>
</evidence>
<reference key="1">
    <citation type="journal article" date="1998" name="J. Bacteriol.">
        <title>The 20S proteasome of Streptomyces coelicolor.</title>
        <authorList>
            <person name="Nagy I."/>
            <person name="Tamura T."/>
            <person name="Vanderleyden J."/>
            <person name="Baumeister W."/>
            <person name="De Mot R."/>
        </authorList>
    </citation>
    <scope>NUCLEOTIDE SEQUENCE [GENOMIC DNA]</scope>
    <scope>PROTEIN SEQUENCE OF 54-61</scope>
    <scope>FUNCTION</scope>
    <scope>CATALYTIC ACTIVITY</scope>
    <scope>SUBSTRATE SPECIFICITY</scope>
    <scope>SUBUNIT</scope>
    <scope>ACTIVITY REGULATION</scope>
    <scope>TEMPERATURE DEPENDENCE</scope>
    <source>
        <strain>ATCC BAA-471 / A3(2) / M145</strain>
    </source>
</reference>
<reference key="2">
    <citation type="journal article" date="2002" name="Nature">
        <title>Complete genome sequence of the model actinomycete Streptomyces coelicolor A3(2).</title>
        <authorList>
            <person name="Bentley S.D."/>
            <person name="Chater K.F."/>
            <person name="Cerdeno-Tarraga A.-M."/>
            <person name="Challis G.L."/>
            <person name="Thomson N.R."/>
            <person name="James K.D."/>
            <person name="Harris D.E."/>
            <person name="Quail M.A."/>
            <person name="Kieser H."/>
            <person name="Harper D."/>
            <person name="Bateman A."/>
            <person name="Brown S."/>
            <person name="Chandra G."/>
            <person name="Chen C.W."/>
            <person name="Collins M."/>
            <person name="Cronin A."/>
            <person name="Fraser A."/>
            <person name="Goble A."/>
            <person name="Hidalgo J."/>
            <person name="Hornsby T."/>
            <person name="Howarth S."/>
            <person name="Huang C.-H."/>
            <person name="Kieser T."/>
            <person name="Larke L."/>
            <person name="Murphy L.D."/>
            <person name="Oliver K."/>
            <person name="O'Neil S."/>
            <person name="Rabbinowitsch E."/>
            <person name="Rajandream M.A."/>
            <person name="Rutherford K.M."/>
            <person name="Rutter S."/>
            <person name="Seeger K."/>
            <person name="Saunders D."/>
            <person name="Sharp S."/>
            <person name="Squares R."/>
            <person name="Squares S."/>
            <person name="Taylor K."/>
            <person name="Warren T."/>
            <person name="Wietzorrek A."/>
            <person name="Woodward J.R."/>
            <person name="Barrell B.G."/>
            <person name="Parkhill J."/>
            <person name="Hopwood D.A."/>
        </authorList>
    </citation>
    <scope>NUCLEOTIDE SEQUENCE [LARGE SCALE GENOMIC DNA]</scope>
    <source>
        <strain>ATCC BAA-471 / A3(2) / M145</strain>
    </source>
</reference>
<gene>
    <name evidence="1" type="primary">prcB</name>
    <name type="ordered locus">SCO1644</name>
    <name type="ORF">SCI41.27</name>
</gene>
<comment type="function">
    <text evidence="1 2">Component of the proteasome core, a large protease complex with broad specificity involved in protein degradation. The S.coelicolor proteasome is able to cleave oligopeptides after hydrophobic residues, but not after basic or acidic residues, thus displaying chymotrypsin-like activity but not trypsin-like activity.</text>
</comment>
<comment type="catalytic activity">
    <reaction evidence="1 2">
        <text>Cleavage of peptide bonds with very broad specificity.</text>
        <dbReference type="EC" id="3.4.25.1"/>
    </reaction>
</comment>
<comment type="activity regulation">
    <text evidence="1 2">The formation of the proteasomal ATPase ARC-20S proteasome complex, likely via the docking of the C-termini of ARC into the intersubunit pockets in the alpha-rings, may trigger opening of the gate for substrate entry. Interconversion between the open-gate and close-gate conformations leads to a dynamic regulation of the 20S proteasome proteolysis activity (By similarity). Peptidolytic activity is completely inhibited by lactacystin, and to a lesser extent, by N-acetyl-Leu-Leu-norleucinal (Ac-LLnL) and benzoyloxycarbonyl-Leu-Leu-Leu-vinylsulfone (Z-LLL-VS) in vitro.</text>
</comment>
<comment type="biophysicochemical properties">
    <temperatureDependence>
        <text evidence="2">Optimum temperature is 55 degrees Celsius.</text>
    </temperatureDependence>
</comment>
<comment type="pathway">
    <text evidence="1">Protein degradation; proteasomal Pup-dependent pathway.</text>
</comment>
<comment type="subunit">
    <text evidence="2">The 20S proteasome core is composed of 14 alpha and 14 beta subunits that assemble into four stacked heptameric rings, resulting in a barrel-shaped structure. The two inner rings, each composed of seven catalytic beta subunits, are sandwiched by two outer rings, each composed of seven alpha subunits. The catalytic chamber with the active sites is on the inside of the barrel. Has probably a gated structure, the ends of the cylinder being occluded by the N-termini of the alpha-subunits. Is likely capped by the proteasome-associated ATPase, ARC.</text>
</comment>
<comment type="subcellular location">
    <subcellularLocation>
        <location evidence="1">Cytoplasm</location>
    </subcellularLocation>
</comment>
<comment type="similarity">
    <text evidence="1">Belongs to the peptidase T1B family.</text>
</comment>
<feature type="propeptide" id="PRO_0000383489" description="Removed in mature form; by autocatalysis" evidence="1 2">
    <location>
        <begin position="1"/>
        <end position="53"/>
    </location>
</feature>
<feature type="chain" id="PRO_5000055072" description="Proteasome subunit beta">
    <location>
        <begin position="54"/>
        <end position="281"/>
    </location>
</feature>
<feature type="active site" description="Nucleophile" evidence="1">
    <location>
        <position position="54"/>
    </location>
</feature>
<protein>
    <recommendedName>
        <fullName evidence="1">Proteasome subunit beta</fullName>
        <ecNumber evidence="1">3.4.25.1</ecNumber>
    </recommendedName>
    <alternativeName>
        <fullName evidence="1">20S proteasome beta subunit</fullName>
    </alternativeName>
    <alternativeName>
        <fullName evidence="1">Proteasome core protein PrcB</fullName>
    </alternativeName>
</protein>